<feature type="chain" id="PRO_0000048899" description="Homeobox-leucine zipper protein HAT2">
    <location>
        <begin position="1"/>
        <end position="283"/>
    </location>
</feature>
<feature type="DNA-binding region" description="Homeobox" evidence="1">
    <location>
        <begin position="127"/>
        <end position="186"/>
    </location>
</feature>
<feature type="region of interest" description="Disordered" evidence="2">
    <location>
        <begin position="64"/>
        <end position="134"/>
    </location>
</feature>
<feature type="region of interest" description="Leucine-zipper">
    <location>
        <begin position="194"/>
        <end position="215"/>
    </location>
</feature>
<feature type="compositionally biased region" description="Low complexity" evidence="2">
    <location>
        <begin position="73"/>
        <end position="84"/>
    </location>
</feature>
<gene>
    <name type="primary">HAT2</name>
    <name type="ordered locus">At5g47370</name>
    <name type="ORF">MQL5.23</name>
</gene>
<comment type="function">
    <text evidence="3">Probable transcription factor that plays a role in auxin-mediated morphogenesis. Negatively regulates lateral root elongation.</text>
</comment>
<comment type="subunit">
    <text evidence="4">Interacts with RBR1.</text>
</comment>
<comment type="interaction">
    <interactant intactId="EBI-4448195">
        <id>P46601</id>
    </interactant>
    <interactant intactId="EBI-3133795">
        <id>Q8GXM7</id>
        <label>ATHB-X</label>
    </interactant>
    <organismsDiffer>false</organismsDiffer>
    <experiments>5</experiments>
</comment>
<comment type="interaction">
    <interactant intactId="EBI-4448195">
        <id>P46601</id>
    </interactant>
    <interactant intactId="EBI-4450405">
        <id>P46602</id>
        <label>HAT3</label>
    </interactant>
    <organismsDiffer>false</organismsDiffer>
    <experiments>3</experiments>
</comment>
<comment type="interaction">
    <interactant intactId="EBI-4448195">
        <id>P46601</id>
    </interactant>
    <interactant intactId="EBI-4428728">
        <id>Q05466</id>
        <label>HAT4</label>
    </interactant>
    <organismsDiffer>false</organismsDiffer>
    <experiments>4</experiments>
</comment>
<comment type="interaction">
    <interactant intactId="EBI-4448195">
        <id>P46601</id>
    </interactant>
    <interactant intactId="EBI-4424877">
        <id>Q9S7W5</id>
        <label>TCP13</label>
    </interactant>
    <organismsDiffer>false</organismsDiffer>
    <experiments>5</experiments>
</comment>
<comment type="interaction">
    <interactant intactId="EBI-4448195">
        <id>P46601</id>
    </interactant>
    <interactant intactId="EBI-15192325">
        <id>Q8LPR5</id>
        <label>TCP4</label>
    </interactant>
    <organismsDiffer>false</organismsDiffer>
    <experiments>3</experiments>
</comment>
<comment type="subcellular location">
    <subcellularLocation>
        <location evidence="5">Nucleus</location>
    </subcellularLocation>
</comment>
<comment type="induction">
    <text evidence="3">By indole-3-acetic acid (IAA).</text>
</comment>
<comment type="similarity">
    <text evidence="5">Belongs to the HD-ZIP homeobox family. Class II subfamily.</text>
</comment>
<dbReference type="EMBL" id="AB067629">
    <property type="protein sequence ID" value="BAB63202.1"/>
    <property type="molecule type" value="mRNA"/>
</dbReference>
<dbReference type="EMBL" id="AJ431183">
    <property type="protein sequence ID" value="CAD24013.1"/>
    <property type="molecule type" value="mRNA"/>
</dbReference>
<dbReference type="EMBL" id="AB018117">
    <property type="protein sequence ID" value="BAA97171.1"/>
    <property type="molecule type" value="Genomic_DNA"/>
</dbReference>
<dbReference type="EMBL" id="CP002688">
    <property type="protein sequence ID" value="AED95503.1"/>
    <property type="molecule type" value="Genomic_DNA"/>
</dbReference>
<dbReference type="EMBL" id="AF428450">
    <property type="protein sequence ID" value="AAL16219.1"/>
    <property type="molecule type" value="mRNA"/>
</dbReference>
<dbReference type="EMBL" id="AY052324">
    <property type="protein sequence ID" value="AAK96517.1"/>
    <property type="molecule type" value="mRNA"/>
</dbReference>
<dbReference type="EMBL" id="AY061904">
    <property type="protein sequence ID" value="AAL31231.1"/>
    <property type="molecule type" value="mRNA"/>
</dbReference>
<dbReference type="EMBL" id="U09335">
    <property type="protein sequence ID" value="AAA56901.1"/>
    <property type="molecule type" value="mRNA"/>
</dbReference>
<dbReference type="PIR" id="T52368">
    <property type="entry name" value="T52368"/>
</dbReference>
<dbReference type="RefSeq" id="NP_199548.1">
    <property type="nucleotide sequence ID" value="NM_124108.3"/>
</dbReference>
<dbReference type="SMR" id="P46601"/>
<dbReference type="BioGRID" id="20032">
    <property type="interactions" value="30"/>
</dbReference>
<dbReference type="DIP" id="DIP-60613N"/>
<dbReference type="FunCoup" id="P46601">
    <property type="interactions" value="43"/>
</dbReference>
<dbReference type="IntAct" id="P46601">
    <property type="interactions" value="26"/>
</dbReference>
<dbReference type="STRING" id="3702.P46601"/>
<dbReference type="iPTMnet" id="P46601"/>
<dbReference type="PaxDb" id="3702-AT5G47370.1"/>
<dbReference type="ProteomicsDB" id="230305"/>
<dbReference type="EnsemblPlants" id="AT5G47370.1">
    <property type="protein sequence ID" value="AT5G47370.1"/>
    <property type="gene ID" value="AT5G47370"/>
</dbReference>
<dbReference type="GeneID" id="834784"/>
<dbReference type="Gramene" id="AT5G47370.1">
    <property type="protein sequence ID" value="AT5G47370.1"/>
    <property type="gene ID" value="AT5G47370"/>
</dbReference>
<dbReference type="KEGG" id="ath:AT5G47370"/>
<dbReference type="Araport" id="AT5G47370"/>
<dbReference type="TAIR" id="AT5G47370">
    <property type="gene designation" value="HAT2"/>
</dbReference>
<dbReference type="eggNOG" id="KOG0483">
    <property type="taxonomic scope" value="Eukaryota"/>
</dbReference>
<dbReference type="HOGENOM" id="CLU_049516_2_1_1"/>
<dbReference type="InParanoid" id="P46601"/>
<dbReference type="OMA" id="GNCTEEN"/>
<dbReference type="OrthoDB" id="6159439at2759"/>
<dbReference type="PhylomeDB" id="P46601"/>
<dbReference type="PRO" id="PR:P46601"/>
<dbReference type="Proteomes" id="UP000006548">
    <property type="component" value="Chromosome 5"/>
</dbReference>
<dbReference type="ExpressionAtlas" id="P46601">
    <property type="expression patterns" value="baseline and differential"/>
</dbReference>
<dbReference type="GO" id="GO:0005634">
    <property type="term" value="C:nucleus"/>
    <property type="evidence" value="ECO:0007669"/>
    <property type="project" value="UniProtKB-SubCell"/>
</dbReference>
<dbReference type="GO" id="GO:0003677">
    <property type="term" value="F:DNA binding"/>
    <property type="evidence" value="ECO:0000250"/>
    <property type="project" value="TAIR"/>
</dbReference>
<dbReference type="GO" id="GO:0003700">
    <property type="term" value="F:DNA-binding transcription factor activity"/>
    <property type="evidence" value="ECO:0000250"/>
    <property type="project" value="TAIR"/>
</dbReference>
<dbReference type="GO" id="GO:0000981">
    <property type="term" value="F:DNA-binding transcription factor activity, RNA polymerase II-specific"/>
    <property type="evidence" value="ECO:0007669"/>
    <property type="project" value="InterPro"/>
</dbReference>
<dbReference type="GO" id="GO:0043565">
    <property type="term" value="F:sequence-specific DNA binding"/>
    <property type="evidence" value="ECO:0007669"/>
    <property type="project" value="InterPro"/>
</dbReference>
<dbReference type="GO" id="GO:0009734">
    <property type="term" value="P:auxin-activated signaling pathway"/>
    <property type="evidence" value="ECO:0000270"/>
    <property type="project" value="TAIR"/>
</dbReference>
<dbReference type="GO" id="GO:0045892">
    <property type="term" value="P:negative regulation of DNA-templated transcription"/>
    <property type="evidence" value="ECO:0000315"/>
    <property type="project" value="TAIR"/>
</dbReference>
<dbReference type="GO" id="GO:0009733">
    <property type="term" value="P:response to auxin"/>
    <property type="evidence" value="ECO:0000315"/>
    <property type="project" value="TAIR"/>
</dbReference>
<dbReference type="GO" id="GO:0009641">
    <property type="term" value="P:shade avoidance"/>
    <property type="evidence" value="ECO:0000270"/>
    <property type="project" value="TAIR"/>
</dbReference>
<dbReference type="GO" id="GO:0009826">
    <property type="term" value="P:unidimensional cell growth"/>
    <property type="evidence" value="ECO:0000315"/>
    <property type="project" value="TAIR"/>
</dbReference>
<dbReference type="CDD" id="cd00086">
    <property type="entry name" value="homeodomain"/>
    <property type="match status" value="1"/>
</dbReference>
<dbReference type="FunFam" id="1.10.10.60:FF:000192">
    <property type="entry name" value="Homeobox-leucine zipper protein HAT22"/>
    <property type="match status" value="1"/>
</dbReference>
<dbReference type="Gene3D" id="1.10.10.60">
    <property type="entry name" value="Homeodomain-like"/>
    <property type="match status" value="1"/>
</dbReference>
<dbReference type="InterPro" id="IPR001356">
    <property type="entry name" value="HD"/>
</dbReference>
<dbReference type="InterPro" id="IPR050762">
    <property type="entry name" value="HD-ZIP_Homeobox_LZ_Class_II"/>
</dbReference>
<dbReference type="InterPro" id="IPR006712">
    <property type="entry name" value="HD-ZIP_N"/>
</dbReference>
<dbReference type="InterPro" id="IPR017970">
    <property type="entry name" value="Homeobox_CS"/>
</dbReference>
<dbReference type="InterPro" id="IPR009057">
    <property type="entry name" value="Homeodomain-like_sf"/>
</dbReference>
<dbReference type="InterPro" id="IPR003106">
    <property type="entry name" value="Leu_zip_homeo"/>
</dbReference>
<dbReference type="PANTHER" id="PTHR45714">
    <property type="entry name" value="HOMEOBOX-LEUCINE ZIPPER PROTEIN HAT14"/>
    <property type="match status" value="1"/>
</dbReference>
<dbReference type="PANTHER" id="PTHR45714:SF16">
    <property type="entry name" value="HOMEOBOX-LEUCINE ZIPPER PROTEIN HAT2"/>
    <property type="match status" value="1"/>
</dbReference>
<dbReference type="Pfam" id="PF02183">
    <property type="entry name" value="HALZ"/>
    <property type="match status" value="1"/>
</dbReference>
<dbReference type="Pfam" id="PF04618">
    <property type="entry name" value="HD-ZIP_N"/>
    <property type="match status" value="1"/>
</dbReference>
<dbReference type="Pfam" id="PF00046">
    <property type="entry name" value="Homeodomain"/>
    <property type="match status" value="1"/>
</dbReference>
<dbReference type="SMART" id="SM00340">
    <property type="entry name" value="HALZ"/>
    <property type="match status" value="1"/>
</dbReference>
<dbReference type="SMART" id="SM00389">
    <property type="entry name" value="HOX"/>
    <property type="match status" value="1"/>
</dbReference>
<dbReference type="SUPFAM" id="SSF46689">
    <property type="entry name" value="Homeodomain-like"/>
    <property type="match status" value="1"/>
</dbReference>
<dbReference type="PROSITE" id="PS00027">
    <property type="entry name" value="HOMEOBOX_1"/>
    <property type="match status" value="1"/>
</dbReference>
<dbReference type="PROSITE" id="PS50071">
    <property type="entry name" value="HOMEOBOX_2"/>
    <property type="match status" value="1"/>
</dbReference>
<evidence type="ECO:0000255" key="1">
    <source>
        <dbReference type="PROSITE-ProRule" id="PRU00108"/>
    </source>
</evidence>
<evidence type="ECO:0000256" key="2">
    <source>
        <dbReference type="SAM" id="MobiDB-lite"/>
    </source>
</evidence>
<evidence type="ECO:0000269" key="3">
    <source>
    </source>
</evidence>
<evidence type="ECO:0000269" key="4">
    <source>
    </source>
</evidence>
<evidence type="ECO:0000305" key="5"/>
<accession>P46601</accession>
<accession>Q546H4</accession>
<accession>Q9LVS2</accession>
<reference key="1">
    <citation type="journal article" date="2002" name="Plant J.">
        <title>The HAT2 gene, a member of the HD-Zip gene family, isolated as an auxin inducible gene by DNA microarray screening, affects auxin response in Arabidopsis.</title>
        <authorList>
            <person name="Sawa S."/>
            <person name="Ohgishi M."/>
            <person name="Goda H."/>
            <person name="Higuchi K."/>
            <person name="Shimada Y."/>
            <person name="Yoshida S."/>
            <person name="Koshiba T."/>
        </authorList>
    </citation>
    <scope>NUCLEOTIDE SEQUENCE [MRNA]</scope>
    <scope>INDUCTION</scope>
    <scope>FUNCTION</scope>
</reference>
<reference key="2">
    <citation type="submission" date="2002-02" db="EMBL/GenBank/DDBJ databases">
        <title>Nucleotide sequence of the Arabidopsis HAT2 mRNA, encoding an HD-Zip II protein related to ATHB-2.</title>
        <authorList>
            <person name="Carabelli M."/>
            <person name="Ciarbelli A.R."/>
            <person name="Ruzza V."/>
            <person name="Sessa G."/>
            <person name="Steindler C."/>
            <person name="Ruberti I."/>
        </authorList>
    </citation>
    <scope>NUCLEOTIDE SEQUENCE [MRNA]</scope>
    <source>
        <strain>cv. Columbia</strain>
    </source>
</reference>
<reference key="3">
    <citation type="journal article" date="2000" name="DNA Res.">
        <title>Structural analysis of Arabidopsis thaliana chromosome 5. X. Sequence features of the regions of 3,076,755 bp covered by sixty P1 and TAC clones.</title>
        <authorList>
            <person name="Sato S."/>
            <person name="Nakamura Y."/>
            <person name="Kaneko T."/>
            <person name="Katoh T."/>
            <person name="Asamizu E."/>
            <person name="Kotani H."/>
            <person name="Tabata S."/>
        </authorList>
    </citation>
    <scope>NUCLEOTIDE SEQUENCE [LARGE SCALE GENOMIC DNA]</scope>
    <source>
        <strain>cv. Columbia</strain>
    </source>
</reference>
<reference key="4">
    <citation type="journal article" date="2017" name="Plant J.">
        <title>Araport11: a complete reannotation of the Arabidopsis thaliana reference genome.</title>
        <authorList>
            <person name="Cheng C.Y."/>
            <person name="Krishnakumar V."/>
            <person name="Chan A.P."/>
            <person name="Thibaud-Nissen F."/>
            <person name="Schobel S."/>
            <person name="Town C.D."/>
        </authorList>
    </citation>
    <scope>GENOME REANNOTATION</scope>
    <source>
        <strain>cv. Columbia</strain>
    </source>
</reference>
<reference key="5">
    <citation type="journal article" date="2003" name="Science">
        <title>Empirical analysis of transcriptional activity in the Arabidopsis genome.</title>
        <authorList>
            <person name="Yamada K."/>
            <person name="Lim J."/>
            <person name="Dale J.M."/>
            <person name="Chen H."/>
            <person name="Shinn P."/>
            <person name="Palm C.J."/>
            <person name="Southwick A.M."/>
            <person name="Wu H.C."/>
            <person name="Kim C.J."/>
            <person name="Nguyen M."/>
            <person name="Pham P.K."/>
            <person name="Cheuk R.F."/>
            <person name="Karlin-Newmann G."/>
            <person name="Liu S.X."/>
            <person name="Lam B."/>
            <person name="Sakano H."/>
            <person name="Wu T."/>
            <person name="Yu G."/>
            <person name="Miranda M."/>
            <person name="Quach H.L."/>
            <person name="Tripp M."/>
            <person name="Chang C.H."/>
            <person name="Lee J.M."/>
            <person name="Toriumi M.J."/>
            <person name="Chan M.M."/>
            <person name="Tang C.C."/>
            <person name="Onodera C.S."/>
            <person name="Deng J.M."/>
            <person name="Akiyama K."/>
            <person name="Ansari Y."/>
            <person name="Arakawa T."/>
            <person name="Banh J."/>
            <person name="Banno F."/>
            <person name="Bowser L."/>
            <person name="Brooks S.Y."/>
            <person name="Carninci P."/>
            <person name="Chao Q."/>
            <person name="Choy N."/>
            <person name="Enju A."/>
            <person name="Goldsmith A.D."/>
            <person name="Gurjal M."/>
            <person name="Hansen N.F."/>
            <person name="Hayashizaki Y."/>
            <person name="Johnson-Hopson C."/>
            <person name="Hsuan V.W."/>
            <person name="Iida K."/>
            <person name="Karnes M."/>
            <person name="Khan S."/>
            <person name="Koesema E."/>
            <person name="Ishida J."/>
            <person name="Jiang P.X."/>
            <person name="Jones T."/>
            <person name="Kawai J."/>
            <person name="Kamiya A."/>
            <person name="Meyers C."/>
            <person name="Nakajima M."/>
            <person name="Narusaka M."/>
            <person name="Seki M."/>
            <person name="Sakurai T."/>
            <person name="Satou M."/>
            <person name="Tamse R."/>
            <person name="Vaysberg M."/>
            <person name="Wallender E.K."/>
            <person name="Wong C."/>
            <person name="Yamamura Y."/>
            <person name="Yuan S."/>
            <person name="Shinozaki K."/>
            <person name="Davis R.W."/>
            <person name="Theologis A."/>
            <person name="Ecker J.R."/>
        </authorList>
    </citation>
    <scope>NUCLEOTIDE SEQUENCE [LARGE SCALE MRNA]</scope>
    <source>
        <strain>cv. Columbia</strain>
    </source>
</reference>
<reference key="6">
    <citation type="journal article" date="1994" name="Proc. Natl. Acad. Sci. U.S.A.">
        <title>Structure of homeobox-leucine zipper genes suggests a model for the evolution of gene families.</title>
        <authorList>
            <person name="Schena M."/>
            <person name="Davis R.W."/>
        </authorList>
    </citation>
    <scope>NUCLEOTIDE SEQUENCE [MRNA] OF 76-283</scope>
    <source>
        <strain>cv. Columbia</strain>
    </source>
</reference>
<reference key="7">
    <citation type="journal article" date="2005" name="Plant Physiol.">
        <title>Homeodomain leucine zipper class I genes in Arabidopsis. Expression patterns and phylogenetic relationships.</title>
        <authorList>
            <person name="Henriksson E."/>
            <person name="Olsson A.S.B."/>
            <person name="Johannesson H."/>
            <person name="Johansson H."/>
            <person name="Hanson J."/>
            <person name="Engstroem P."/>
            <person name="Soederman E."/>
        </authorList>
    </citation>
    <scope>GENE FAMILY</scope>
</reference>
<reference key="8">
    <citation type="journal article" date="2013" name="PLoS Biol.">
        <title>A SCARECROW-RETINOBLASTOMA protein network controls protective quiescence in the Arabidopsis root stem cell organizer.</title>
        <authorList>
            <person name="Cruz-Ramirez A."/>
            <person name="Diaz-Trivino S."/>
            <person name="Wachsman G."/>
            <person name="Du Y."/>
            <person name="Arteaga-Vazquez M."/>
            <person name="Zhang H."/>
            <person name="Benjamins R."/>
            <person name="Blilou I."/>
            <person name="Neef A.B."/>
            <person name="Chandler V."/>
            <person name="Scheres B."/>
        </authorList>
    </citation>
    <scope>INTERACTION WITH RBR1</scope>
</reference>
<proteinExistence type="evidence at protein level"/>
<protein>
    <recommendedName>
        <fullName>Homeobox-leucine zipper protein HAT2</fullName>
    </recommendedName>
    <alternativeName>
        <fullName>Homeodomain-leucine zipper protein HAT2</fullName>
        <shortName>HD-ZIP protein 2</shortName>
    </alternativeName>
</protein>
<sequence>MMMGKEDLGLSLSLGFSQNHNPLQMNLNPNSSLSNNLQRLPWNQTFDPTSDLRKIDVNSFPSTVNCEEDTGVSSPNSTISSTISGKRSEREGISGTGVGSGDDHDEITPDRGYSRGTSDEEEDGGETSRKKLRLSKDQSAFLEETFKEHNTLNPKQKLALAKKLNLTARQVEVWFQNRRARTKLKQTEVDCEYLKRCVEKLTEENRRLQKEAMELRTLKLSPQFYGQMTPPTTLIMCPSCERVGGPSSSNHHHNHRPVSINPWVACAGQVAHGLNFEALRPRS</sequence>
<keyword id="KW-0238">DNA-binding</keyword>
<keyword id="KW-0371">Homeobox</keyword>
<keyword id="KW-0539">Nucleus</keyword>
<keyword id="KW-1185">Reference proteome</keyword>
<keyword id="KW-0804">Transcription</keyword>
<keyword id="KW-0805">Transcription regulation</keyword>
<organism>
    <name type="scientific">Arabidopsis thaliana</name>
    <name type="common">Mouse-ear cress</name>
    <dbReference type="NCBI Taxonomy" id="3702"/>
    <lineage>
        <taxon>Eukaryota</taxon>
        <taxon>Viridiplantae</taxon>
        <taxon>Streptophyta</taxon>
        <taxon>Embryophyta</taxon>
        <taxon>Tracheophyta</taxon>
        <taxon>Spermatophyta</taxon>
        <taxon>Magnoliopsida</taxon>
        <taxon>eudicotyledons</taxon>
        <taxon>Gunneridae</taxon>
        <taxon>Pentapetalae</taxon>
        <taxon>rosids</taxon>
        <taxon>malvids</taxon>
        <taxon>Brassicales</taxon>
        <taxon>Brassicaceae</taxon>
        <taxon>Camelineae</taxon>
        <taxon>Arabidopsis</taxon>
    </lineage>
</organism>
<name>HAT2_ARATH</name>